<feature type="chain" id="PRO_1000010937" description="Iron-sulfur cluster assembly protein CyaY">
    <location>
        <begin position="1"/>
        <end position="108"/>
    </location>
</feature>
<sequence length="108" mass="12495">MNDSQYHQLIDDLLINLEEMLDDVEADIDYESASSILTLIFVNGSKIIINKQPPLHQLWVATKFNGHHFNYQDGLWIDERTGVEFWQFMNDAASKQAEVPVSFPRPTE</sequence>
<evidence type="ECO:0000255" key="1">
    <source>
        <dbReference type="HAMAP-Rule" id="MF_00142"/>
    </source>
</evidence>
<dbReference type="EMBL" id="CP000388">
    <property type="protein sequence ID" value="ABG38877.1"/>
    <property type="molecule type" value="Genomic_DNA"/>
</dbReference>
<dbReference type="RefSeq" id="WP_011573275.1">
    <property type="nucleotide sequence ID" value="NC_008228.1"/>
</dbReference>
<dbReference type="SMR" id="Q15Z11"/>
<dbReference type="STRING" id="342610.Patl_0346"/>
<dbReference type="KEGG" id="pat:Patl_0346"/>
<dbReference type="eggNOG" id="COG1965">
    <property type="taxonomic scope" value="Bacteria"/>
</dbReference>
<dbReference type="HOGENOM" id="CLU_080880_3_0_6"/>
<dbReference type="OrthoDB" id="285675at2"/>
<dbReference type="Proteomes" id="UP000001981">
    <property type="component" value="Chromosome"/>
</dbReference>
<dbReference type="GO" id="GO:0005829">
    <property type="term" value="C:cytosol"/>
    <property type="evidence" value="ECO:0007669"/>
    <property type="project" value="TreeGrafter"/>
</dbReference>
<dbReference type="GO" id="GO:0008199">
    <property type="term" value="F:ferric iron binding"/>
    <property type="evidence" value="ECO:0007669"/>
    <property type="project" value="InterPro"/>
</dbReference>
<dbReference type="GO" id="GO:0008198">
    <property type="term" value="F:ferrous iron binding"/>
    <property type="evidence" value="ECO:0007669"/>
    <property type="project" value="TreeGrafter"/>
</dbReference>
<dbReference type="GO" id="GO:0016226">
    <property type="term" value="P:iron-sulfur cluster assembly"/>
    <property type="evidence" value="ECO:0007669"/>
    <property type="project" value="UniProtKB-UniRule"/>
</dbReference>
<dbReference type="CDD" id="cd00503">
    <property type="entry name" value="Frataxin"/>
    <property type="match status" value="1"/>
</dbReference>
<dbReference type="Gene3D" id="3.30.920.10">
    <property type="entry name" value="Frataxin/CyaY"/>
    <property type="match status" value="1"/>
</dbReference>
<dbReference type="HAMAP" id="MF_00142">
    <property type="entry name" value="CyaY"/>
    <property type="match status" value="1"/>
</dbReference>
<dbReference type="InterPro" id="IPR047584">
    <property type="entry name" value="CyaY"/>
</dbReference>
<dbReference type="InterPro" id="IPR002908">
    <property type="entry name" value="Frataxin/CyaY"/>
</dbReference>
<dbReference type="InterPro" id="IPR036524">
    <property type="entry name" value="Frataxin/CyaY_sf"/>
</dbReference>
<dbReference type="InterPro" id="IPR020895">
    <property type="entry name" value="Frataxin_CS"/>
</dbReference>
<dbReference type="NCBIfam" id="TIGR03421">
    <property type="entry name" value="FeS_CyaY"/>
    <property type="match status" value="1"/>
</dbReference>
<dbReference type="PANTHER" id="PTHR16821">
    <property type="entry name" value="FRATAXIN"/>
    <property type="match status" value="1"/>
</dbReference>
<dbReference type="PANTHER" id="PTHR16821:SF2">
    <property type="entry name" value="FRATAXIN, MITOCHONDRIAL"/>
    <property type="match status" value="1"/>
</dbReference>
<dbReference type="Pfam" id="PF01491">
    <property type="entry name" value="Frataxin_Cyay"/>
    <property type="match status" value="1"/>
</dbReference>
<dbReference type="SMART" id="SM01219">
    <property type="entry name" value="Frataxin_Cyay"/>
    <property type="match status" value="1"/>
</dbReference>
<dbReference type="SUPFAM" id="SSF55387">
    <property type="entry name" value="Frataxin/Nqo15-like"/>
    <property type="match status" value="1"/>
</dbReference>
<dbReference type="PROSITE" id="PS01344">
    <property type="entry name" value="FRATAXIN_1"/>
    <property type="match status" value="1"/>
</dbReference>
<dbReference type="PROSITE" id="PS50810">
    <property type="entry name" value="FRATAXIN_2"/>
    <property type="match status" value="1"/>
</dbReference>
<gene>
    <name evidence="1" type="primary">cyaY</name>
    <name type="ordered locus">Patl_0346</name>
</gene>
<proteinExistence type="inferred from homology"/>
<reference key="1">
    <citation type="submission" date="2006-06" db="EMBL/GenBank/DDBJ databases">
        <title>Complete sequence of Pseudoalteromonas atlantica T6c.</title>
        <authorList>
            <consortium name="US DOE Joint Genome Institute"/>
            <person name="Copeland A."/>
            <person name="Lucas S."/>
            <person name="Lapidus A."/>
            <person name="Barry K."/>
            <person name="Detter J.C."/>
            <person name="Glavina del Rio T."/>
            <person name="Hammon N."/>
            <person name="Israni S."/>
            <person name="Dalin E."/>
            <person name="Tice H."/>
            <person name="Pitluck S."/>
            <person name="Saunders E."/>
            <person name="Brettin T."/>
            <person name="Bruce D."/>
            <person name="Han C."/>
            <person name="Tapia R."/>
            <person name="Gilna P."/>
            <person name="Schmutz J."/>
            <person name="Larimer F."/>
            <person name="Land M."/>
            <person name="Hauser L."/>
            <person name="Kyrpides N."/>
            <person name="Kim E."/>
            <person name="Karls A.C."/>
            <person name="Bartlett D."/>
            <person name="Higgins B.P."/>
            <person name="Richardson P."/>
        </authorList>
    </citation>
    <scope>NUCLEOTIDE SEQUENCE [LARGE SCALE GENOMIC DNA]</scope>
    <source>
        <strain>T6c / ATCC BAA-1087</strain>
    </source>
</reference>
<accession>Q15Z11</accession>
<protein>
    <recommendedName>
        <fullName evidence="1">Iron-sulfur cluster assembly protein CyaY</fullName>
    </recommendedName>
</protein>
<name>CYAY_PSEA6</name>
<keyword id="KW-0408">Iron</keyword>
<keyword id="KW-0479">Metal-binding</keyword>
<comment type="function">
    <text evidence="1">Involved in iron-sulfur (Fe-S) cluster assembly. May act as a regulator of Fe-S biogenesis.</text>
</comment>
<comment type="similarity">
    <text evidence="1">Belongs to the frataxin family.</text>
</comment>
<organism>
    <name type="scientific">Pseudoalteromonas atlantica (strain T6c / ATCC BAA-1087)</name>
    <dbReference type="NCBI Taxonomy" id="3042615"/>
    <lineage>
        <taxon>Bacteria</taxon>
        <taxon>Pseudomonadati</taxon>
        <taxon>Pseudomonadota</taxon>
        <taxon>Gammaproteobacteria</taxon>
        <taxon>Alteromonadales</taxon>
        <taxon>Alteromonadaceae</taxon>
        <taxon>Paraglaciecola</taxon>
    </lineage>
</organism>